<dbReference type="EMBL" id="CU928162">
    <property type="protein sequence ID" value="CAR06646.1"/>
    <property type="molecule type" value="Genomic_DNA"/>
</dbReference>
<dbReference type="RefSeq" id="WP_000543535.1">
    <property type="nucleotide sequence ID" value="NC_011745.1"/>
</dbReference>
<dbReference type="SMR" id="B7MQC8"/>
<dbReference type="GeneID" id="93777047"/>
<dbReference type="KEGG" id="ecq:ECED1_0436"/>
<dbReference type="HOGENOM" id="CLU_108412_0_0_6"/>
<dbReference type="Proteomes" id="UP000000748">
    <property type="component" value="Chromosome"/>
</dbReference>
<dbReference type="GO" id="GO:0005524">
    <property type="term" value="F:ATP binding"/>
    <property type="evidence" value="ECO:0007669"/>
    <property type="project" value="UniProtKB-KW"/>
</dbReference>
<dbReference type="GO" id="GO:0003677">
    <property type="term" value="F:DNA binding"/>
    <property type="evidence" value="ECO:0007669"/>
    <property type="project" value="UniProtKB-KW"/>
</dbReference>
<dbReference type="GO" id="GO:0008270">
    <property type="term" value="F:zinc ion binding"/>
    <property type="evidence" value="ECO:0007669"/>
    <property type="project" value="UniProtKB-UniRule"/>
</dbReference>
<dbReference type="GO" id="GO:0045892">
    <property type="term" value="P:negative regulation of DNA-templated transcription"/>
    <property type="evidence" value="ECO:0007669"/>
    <property type="project" value="UniProtKB-UniRule"/>
</dbReference>
<dbReference type="HAMAP" id="MF_00440">
    <property type="entry name" value="NrdR"/>
    <property type="match status" value="1"/>
</dbReference>
<dbReference type="InterPro" id="IPR005144">
    <property type="entry name" value="ATP-cone_dom"/>
</dbReference>
<dbReference type="InterPro" id="IPR055173">
    <property type="entry name" value="NrdR-like_N"/>
</dbReference>
<dbReference type="InterPro" id="IPR003796">
    <property type="entry name" value="RNR_NrdR-like"/>
</dbReference>
<dbReference type="NCBIfam" id="TIGR00244">
    <property type="entry name" value="transcriptional regulator NrdR"/>
    <property type="match status" value="1"/>
</dbReference>
<dbReference type="PANTHER" id="PTHR30455">
    <property type="entry name" value="TRANSCRIPTIONAL REPRESSOR NRDR"/>
    <property type="match status" value="1"/>
</dbReference>
<dbReference type="PANTHER" id="PTHR30455:SF2">
    <property type="entry name" value="TRANSCRIPTIONAL REPRESSOR NRDR"/>
    <property type="match status" value="1"/>
</dbReference>
<dbReference type="Pfam" id="PF03477">
    <property type="entry name" value="ATP-cone"/>
    <property type="match status" value="1"/>
</dbReference>
<dbReference type="Pfam" id="PF22811">
    <property type="entry name" value="Zn_ribbon_NrdR"/>
    <property type="match status" value="1"/>
</dbReference>
<dbReference type="PROSITE" id="PS51161">
    <property type="entry name" value="ATP_CONE"/>
    <property type="match status" value="1"/>
</dbReference>
<name>NRDR_ECO81</name>
<keyword id="KW-0067">ATP-binding</keyword>
<keyword id="KW-0238">DNA-binding</keyword>
<keyword id="KW-0479">Metal-binding</keyword>
<keyword id="KW-0547">Nucleotide-binding</keyword>
<keyword id="KW-0678">Repressor</keyword>
<keyword id="KW-0804">Transcription</keyword>
<keyword id="KW-0805">Transcription regulation</keyword>
<keyword id="KW-0862">Zinc</keyword>
<keyword id="KW-0863">Zinc-finger</keyword>
<gene>
    <name evidence="1" type="primary">nrdR</name>
    <name type="ordered locus">ECED1_0436</name>
</gene>
<feature type="chain" id="PRO_1000191797" description="Transcriptional repressor NrdR">
    <location>
        <begin position="1"/>
        <end position="149"/>
    </location>
</feature>
<feature type="domain" description="ATP-cone" evidence="1">
    <location>
        <begin position="49"/>
        <end position="139"/>
    </location>
</feature>
<feature type="zinc finger region" evidence="1">
    <location>
        <begin position="3"/>
        <end position="34"/>
    </location>
</feature>
<sequence>MHCPFCFAVDTKVIDSRLVGEGSSVRRRRQCLVCNERFTTFEVAELVMPRVVKSNDVREPFNEEKLRSGMLRALEKRPVSSDDVEMAINHIKSQLRATGEREVPSKMIGNLVMEQLKKLDKVAYIRFASVYRSFEDIKEFGEEIARLED</sequence>
<comment type="function">
    <text evidence="1">Negatively regulates transcription of bacterial ribonucleotide reductase nrd genes and operons by binding to NrdR-boxes.</text>
</comment>
<comment type="cofactor">
    <cofactor evidence="1">
        <name>Zn(2+)</name>
        <dbReference type="ChEBI" id="CHEBI:29105"/>
    </cofactor>
    <text evidence="1">Binds 1 zinc ion.</text>
</comment>
<comment type="similarity">
    <text evidence="1">Belongs to the NrdR family.</text>
</comment>
<accession>B7MQC8</accession>
<evidence type="ECO:0000255" key="1">
    <source>
        <dbReference type="HAMAP-Rule" id="MF_00440"/>
    </source>
</evidence>
<proteinExistence type="inferred from homology"/>
<reference key="1">
    <citation type="journal article" date="2009" name="PLoS Genet.">
        <title>Organised genome dynamics in the Escherichia coli species results in highly diverse adaptive paths.</title>
        <authorList>
            <person name="Touchon M."/>
            <person name="Hoede C."/>
            <person name="Tenaillon O."/>
            <person name="Barbe V."/>
            <person name="Baeriswyl S."/>
            <person name="Bidet P."/>
            <person name="Bingen E."/>
            <person name="Bonacorsi S."/>
            <person name="Bouchier C."/>
            <person name="Bouvet O."/>
            <person name="Calteau A."/>
            <person name="Chiapello H."/>
            <person name="Clermont O."/>
            <person name="Cruveiller S."/>
            <person name="Danchin A."/>
            <person name="Diard M."/>
            <person name="Dossat C."/>
            <person name="Karoui M.E."/>
            <person name="Frapy E."/>
            <person name="Garry L."/>
            <person name="Ghigo J.M."/>
            <person name="Gilles A.M."/>
            <person name="Johnson J."/>
            <person name="Le Bouguenec C."/>
            <person name="Lescat M."/>
            <person name="Mangenot S."/>
            <person name="Martinez-Jehanne V."/>
            <person name="Matic I."/>
            <person name="Nassif X."/>
            <person name="Oztas S."/>
            <person name="Petit M.A."/>
            <person name="Pichon C."/>
            <person name="Rouy Z."/>
            <person name="Ruf C.S."/>
            <person name="Schneider D."/>
            <person name="Tourret J."/>
            <person name="Vacherie B."/>
            <person name="Vallenet D."/>
            <person name="Medigue C."/>
            <person name="Rocha E.P.C."/>
            <person name="Denamur E."/>
        </authorList>
    </citation>
    <scope>NUCLEOTIDE SEQUENCE [LARGE SCALE GENOMIC DNA]</scope>
    <source>
        <strain>ED1a</strain>
    </source>
</reference>
<organism>
    <name type="scientific">Escherichia coli O81 (strain ED1a)</name>
    <dbReference type="NCBI Taxonomy" id="585397"/>
    <lineage>
        <taxon>Bacteria</taxon>
        <taxon>Pseudomonadati</taxon>
        <taxon>Pseudomonadota</taxon>
        <taxon>Gammaproteobacteria</taxon>
        <taxon>Enterobacterales</taxon>
        <taxon>Enterobacteriaceae</taxon>
        <taxon>Escherichia</taxon>
    </lineage>
</organism>
<protein>
    <recommendedName>
        <fullName evidence="1">Transcriptional repressor NrdR</fullName>
    </recommendedName>
</protein>